<reference key="1">
    <citation type="journal article" date="1998" name="DNA Res.">
        <title>Complete sequence and gene organization of the genome of a hyper-thermophilic archaebacterium, Pyrococcus horikoshii OT3.</title>
        <authorList>
            <person name="Kawarabayasi Y."/>
            <person name="Sawada M."/>
            <person name="Horikawa H."/>
            <person name="Haikawa Y."/>
            <person name="Hino Y."/>
            <person name="Yamamoto S."/>
            <person name="Sekine M."/>
            <person name="Baba S."/>
            <person name="Kosugi H."/>
            <person name="Hosoyama A."/>
            <person name="Nagai Y."/>
            <person name="Sakai M."/>
            <person name="Ogura K."/>
            <person name="Otsuka R."/>
            <person name="Nakazawa H."/>
            <person name="Takamiya M."/>
            <person name="Ohfuku Y."/>
            <person name="Funahashi T."/>
            <person name="Tanaka T."/>
            <person name="Kudoh Y."/>
            <person name="Yamazaki J."/>
            <person name="Kushida N."/>
            <person name="Oguchi A."/>
            <person name="Aoki K."/>
            <person name="Yoshizawa T."/>
            <person name="Nakamura Y."/>
            <person name="Robb F.T."/>
            <person name="Horikoshi K."/>
            <person name="Masuchi Y."/>
            <person name="Shizuya H."/>
            <person name="Kikuchi H."/>
        </authorList>
    </citation>
    <scope>NUCLEOTIDE SEQUENCE [LARGE SCALE GENOMIC DNA]</scope>
    <source>
        <strain>ATCC 700860 / DSM 12428 / JCM 9974 / NBRC 100139 / OT-3</strain>
    </source>
</reference>
<reference key="2">
    <citation type="submission" date="2009-02" db="PDB data bank">
        <title>Crystal structure of an uncharacterized sugar kinase PH1459 from Pyrococcus horikoshii in complexes with ATP and AMP-PNP.</title>
        <authorList>
            <consortium name="New York SGX Research Center for Structural Genomics (NYSGXRC)"/>
        </authorList>
    </citation>
    <scope>X-RAY CRYSTALLOGRAPHY (1.90 ANGSTROMS) OF 8-309 IN COMPLEXES WITH ATP AND AN ATP ANALOG</scope>
</reference>
<feature type="chain" id="PRO_0000080153" description="Putative sugar kinase PH1459">
    <location>
        <begin position="1"/>
        <end position="310"/>
    </location>
</feature>
<feature type="binding site" evidence="2">
    <location>
        <position position="194"/>
    </location>
    <ligand>
        <name>ATP</name>
        <dbReference type="ChEBI" id="CHEBI:30616"/>
    </ligand>
</feature>
<feature type="binding site" evidence="2">
    <location>
        <position position="219"/>
    </location>
    <ligand>
        <name>ATP</name>
        <dbReference type="ChEBI" id="CHEBI:30616"/>
    </ligand>
</feature>
<feature type="binding site" evidence="2">
    <location>
        <position position="224"/>
    </location>
    <ligand>
        <name>ATP</name>
        <dbReference type="ChEBI" id="CHEBI:30616"/>
    </ligand>
</feature>
<feature type="strand" evidence="3">
    <location>
        <begin position="8"/>
        <end position="12"/>
    </location>
</feature>
<feature type="strand" evidence="3">
    <location>
        <begin position="15"/>
        <end position="24"/>
    </location>
</feature>
<feature type="turn" evidence="3">
    <location>
        <begin position="26"/>
        <end position="28"/>
    </location>
</feature>
<feature type="strand" evidence="3">
    <location>
        <begin position="31"/>
        <end position="37"/>
    </location>
</feature>
<feature type="helix" evidence="3">
    <location>
        <begin position="39"/>
        <end position="49"/>
    </location>
</feature>
<feature type="strand" evidence="3">
    <location>
        <begin position="53"/>
        <end position="63"/>
    </location>
</feature>
<feature type="helix" evidence="3">
    <location>
        <begin position="64"/>
        <end position="75"/>
    </location>
</feature>
<feature type="strand" evidence="3">
    <location>
        <begin position="83"/>
        <end position="89"/>
    </location>
</feature>
<feature type="strand" evidence="3">
    <location>
        <begin position="92"/>
        <end position="97"/>
    </location>
</feature>
<feature type="strand" evidence="3">
    <location>
        <begin position="99"/>
        <end position="102"/>
    </location>
</feature>
<feature type="strand" evidence="3">
    <location>
        <begin position="104"/>
        <end position="107"/>
    </location>
</feature>
<feature type="helix" evidence="3">
    <location>
        <begin position="112"/>
        <end position="114"/>
    </location>
</feature>
<feature type="helix" evidence="3">
    <location>
        <begin position="118"/>
        <end position="120"/>
    </location>
</feature>
<feature type="helix" evidence="3">
    <location>
        <begin position="123"/>
        <end position="128"/>
    </location>
</feature>
<feature type="strand" evidence="3">
    <location>
        <begin position="130"/>
        <end position="136"/>
    </location>
</feature>
<feature type="helix" evidence="3">
    <location>
        <begin position="137"/>
        <end position="140"/>
    </location>
</feature>
<feature type="helix" evidence="3">
    <location>
        <begin position="144"/>
        <end position="155"/>
    </location>
</feature>
<feature type="strand" evidence="3">
    <location>
        <begin position="159"/>
        <end position="164"/>
    </location>
</feature>
<feature type="helix" evidence="3">
    <location>
        <begin position="169"/>
        <end position="172"/>
    </location>
</feature>
<feature type="helix" evidence="3">
    <location>
        <begin position="176"/>
        <end position="189"/>
    </location>
</feature>
<feature type="strand" evidence="3">
    <location>
        <begin position="191"/>
        <end position="196"/>
    </location>
</feature>
<feature type="helix" evidence="3">
    <location>
        <begin position="197"/>
        <end position="204"/>
    </location>
</feature>
<feature type="turn" evidence="3">
    <location>
        <begin position="205"/>
        <end position="207"/>
    </location>
</feature>
<feature type="strand" evidence="3">
    <location>
        <begin position="213"/>
        <end position="219"/>
    </location>
</feature>
<feature type="helix" evidence="3">
    <location>
        <begin position="221"/>
        <end position="223"/>
    </location>
</feature>
<feature type="strand" evidence="3">
    <location>
        <begin position="224"/>
        <end position="229"/>
    </location>
</feature>
<feature type="strand" evidence="3">
    <location>
        <begin position="232"/>
        <end position="237"/>
    </location>
</feature>
<feature type="helix" evidence="3">
    <location>
        <begin position="249"/>
        <end position="263"/>
    </location>
</feature>
<feature type="strand" evidence="3">
    <location>
        <begin position="264"/>
        <end position="266"/>
    </location>
</feature>
<feature type="helix" evidence="3">
    <location>
        <begin position="269"/>
        <end position="283"/>
    </location>
</feature>
<feature type="helix" evidence="3">
    <location>
        <begin position="295"/>
        <end position="298"/>
    </location>
</feature>
<feature type="helix" evidence="3">
    <location>
        <begin position="302"/>
        <end position="308"/>
    </location>
</feature>
<proteinExistence type="evidence at protein level"/>
<keyword id="KW-0002">3D-structure</keyword>
<keyword id="KW-0067">ATP-binding</keyword>
<keyword id="KW-0418">Kinase</keyword>
<keyword id="KW-0547">Nucleotide-binding</keyword>
<keyword id="KW-0808">Transferase</keyword>
<evidence type="ECO:0000305" key="1"/>
<evidence type="ECO:0007744" key="2">
    <source>
        <dbReference type="PDB" id="3GBU"/>
    </source>
</evidence>
<evidence type="ECO:0007829" key="3">
    <source>
        <dbReference type="PDB" id="3EWM"/>
    </source>
</evidence>
<gene>
    <name type="ordered locus">PH1459</name>
    <name type="ORF">PHCC008</name>
</gene>
<dbReference type="EC" id="2.7.1.-" evidence="1"/>
<dbReference type="EMBL" id="BA000001">
    <property type="protein sequence ID" value="BAA30566.1"/>
    <property type="molecule type" value="Genomic_DNA"/>
</dbReference>
<dbReference type="PIR" id="F71020">
    <property type="entry name" value="F71020"/>
</dbReference>
<dbReference type="PDB" id="3EWM">
    <property type="method" value="X-ray"/>
    <property type="resolution" value="1.90 A"/>
    <property type="chains" value="A/B=8-309"/>
</dbReference>
<dbReference type="PDB" id="3GBU">
    <property type="method" value="X-ray"/>
    <property type="resolution" value="2.20 A"/>
    <property type="chains" value="A/B/C/D=8-309"/>
</dbReference>
<dbReference type="PDB" id="3IH0">
    <property type="method" value="X-ray"/>
    <property type="resolution" value="1.90 A"/>
    <property type="chains" value="A/B=8-309"/>
</dbReference>
<dbReference type="PDBsum" id="3EWM"/>
<dbReference type="PDBsum" id="3GBU"/>
<dbReference type="PDBsum" id="3IH0"/>
<dbReference type="SMR" id="O59128"/>
<dbReference type="STRING" id="70601.gene:9378436"/>
<dbReference type="EnsemblBacteria" id="BAA30566">
    <property type="protein sequence ID" value="BAA30566"/>
    <property type="gene ID" value="BAA30566"/>
</dbReference>
<dbReference type="KEGG" id="pho:PH1459"/>
<dbReference type="eggNOG" id="arCOG00014">
    <property type="taxonomic scope" value="Archaea"/>
</dbReference>
<dbReference type="OrthoDB" id="124714at2157"/>
<dbReference type="EvolutionaryTrace" id="O59128"/>
<dbReference type="Proteomes" id="UP000000752">
    <property type="component" value="Chromosome"/>
</dbReference>
<dbReference type="GO" id="GO:0005524">
    <property type="term" value="F:ATP binding"/>
    <property type="evidence" value="ECO:0007669"/>
    <property type="project" value="UniProtKB-KW"/>
</dbReference>
<dbReference type="GO" id="GO:0008865">
    <property type="term" value="F:fructokinase activity"/>
    <property type="evidence" value="ECO:0007669"/>
    <property type="project" value="UniProtKB-ARBA"/>
</dbReference>
<dbReference type="GO" id="GO:0006000">
    <property type="term" value="P:fructose metabolic process"/>
    <property type="evidence" value="ECO:0007669"/>
    <property type="project" value="UniProtKB-ARBA"/>
</dbReference>
<dbReference type="CDD" id="cd01167">
    <property type="entry name" value="bac_FRK"/>
    <property type="match status" value="1"/>
</dbReference>
<dbReference type="Gene3D" id="3.40.1190.20">
    <property type="match status" value="1"/>
</dbReference>
<dbReference type="InterPro" id="IPR002173">
    <property type="entry name" value="Carboh/pur_kinase_PfkB_CS"/>
</dbReference>
<dbReference type="InterPro" id="IPR050306">
    <property type="entry name" value="PfkB_Carbo_kinase"/>
</dbReference>
<dbReference type="InterPro" id="IPR011611">
    <property type="entry name" value="PfkB_dom"/>
</dbReference>
<dbReference type="InterPro" id="IPR002139">
    <property type="entry name" value="Ribo/fructo_kinase"/>
</dbReference>
<dbReference type="InterPro" id="IPR029056">
    <property type="entry name" value="Ribokinase-like"/>
</dbReference>
<dbReference type="PANTHER" id="PTHR43085">
    <property type="entry name" value="HEXOKINASE FAMILY MEMBER"/>
    <property type="match status" value="1"/>
</dbReference>
<dbReference type="PANTHER" id="PTHR43085:SF1">
    <property type="entry name" value="PSEUDOURIDINE KINASE-RELATED"/>
    <property type="match status" value="1"/>
</dbReference>
<dbReference type="Pfam" id="PF00294">
    <property type="entry name" value="PfkB"/>
    <property type="match status" value="1"/>
</dbReference>
<dbReference type="PRINTS" id="PR00990">
    <property type="entry name" value="RIBOKINASE"/>
</dbReference>
<dbReference type="SUPFAM" id="SSF53613">
    <property type="entry name" value="Ribokinase-like"/>
    <property type="match status" value="1"/>
</dbReference>
<dbReference type="PROSITE" id="PS00583">
    <property type="entry name" value="PFKB_KINASES_1"/>
    <property type="match status" value="1"/>
</dbReference>
<dbReference type="PROSITE" id="PS00584">
    <property type="entry name" value="PFKB_KINASES_2"/>
    <property type="match status" value="1"/>
</dbReference>
<protein>
    <recommendedName>
        <fullName evidence="1">Putative sugar kinase PH1459</fullName>
        <ecNumber evidence="1">2.7.1.-</ecNumber>
    </recommendedName>
</protein>
<organism>
    <name type="scientific">Pyrococcus horikoshii (strain ATCC 700860 / DSM 12428 / JCM 9974 / NBRC 100139 / OT-3)</name>
    <dbReference type="NCBI Taxonomy" id="70601"/>
    <lineage>
        <taxon>Archaea</taxon>
        <taxon>Methanobacteriati</taxon>
        <taxon>Methanobacteriota</taxon>
        <taxon>Thermococci</taxon>
        <taxon>Thermococcales</taxon>
        <taxon>Thermococcaceae</taxon>
        <taxon>Pyrococcus</taxon>
    </lineage>
</organism>
<accession>O59128</accession>
<sequence>MNLVFGMIASIGELLIDLISVEEGDLKDVRLFEKHPGGAPANVAVGVSRLGVKSSLISKVGNDPFGEYLIEELSKENVDTRGIVKDEKKHTGIVFVQLKGASPSFLLYDDVAYFNMTLNDINWDIVEEAKIVNFGSVILARNPSRETVMKVIKKIKGSSLIAFDVNLRLDLWRGQEEEMIKVLEESIKLADIVKASEEEVLYLENQGVEVKGSMLTAITLGPKGCRLIKNETVVDVPSYNVNPLDTTGAGDAFMAALLVGILKLKGLDLLKLGKFANLVAALSTQKRGAWSTPRKDELLKYKEAREVLAP</sequence>
<name>Y1459_PYRHO</name>
<comment type="similarity">
    <text evidence="1">Belongs to the carbohydrate kinase PfkB family.</text>
</comment>